<dbReference type="EC" id="1.17.7.3" evidence="1"/>
<dbReference type="EMBL" id="AE017180">
    <property type="protein sequence ID" value="AAR34833.1"/>
    <property type="molecule type" value="Genomic_DNA"/>
</dbReference>
<dbReference type="RefSeq" id="NP_952510.1">
    <property type="nucleotide sequence ID" value="NC_002939.5"/>
</dbReference>
<dbReference type="RefSeq" id="WP_010942105.1">
    <property type="nucleotide sequence ID" value="NC_002939.5"/>
</dbReference>
<dbReference type="SMR" id="Q74D60"/>
<dbReference type="FunCoup" id="Q74D60">
    <property type="interactions" value="357"/>
</dbReference>
<dbReference type="STRING" id="243231.GSU1459"/>
<dbReference type="EnsemblBacteria" id="AAR34833">
    <property type="protein sequence ID" value="AAR34833"/>
    <property type="gene ID" value="GSU1459"/>
</dbReference>
<dbReference type="KEGG" id="gsu:GSU1459"/>
<dbReference type="PATRIC" id="fig|243231.5.peg.1505"/>
<dbReference type="eggNOG" id="COG0821">
    <property type="taxonomic scope" value="Bacteria"/>
</dbReference>
<dbReference type="HOGENOM" id="CLU_042258_0_0_7"/>
<dbReference type="InParanoid" id="Q74D60"/>
<dbReference type="OrthoDB" id="9803214at2"/>
<dbReference type="UniPathway" id="UPA00056">
    <property type="reaction ID" value="UER00096"/>
</dbReference>
<dbReference type="Proteomes" id="UP000000577">
    <property type="component" value="Chromosome"/>
</dbReference>
<dbReference type="GO" id="GO:0051539">
    <property type="term" value="F:4 iron, 4 sulfur cluster binding"/>
    <property type="evidence" value="ECO:0007669"/>
    <property type="project" value="UniProtKB-UniRule"/>
</dbReference>
<dbReference type="GO" id="GO:0046429">
    <property type="term" value="F:4-hydroxy-3-methylbut-2-en-1-yl diphosphate synthase activity (ferredoxin)"/>
    <property type="evidence" value="ECO:0000318"/>
    <property type="project" value="GO_Central"/>
</dbReference>
<dbReference type="GO" id="GO:0141197">
    <property type="term" value="F:4-hydroxy-3-methylbut-2-enyl-diphosphate synthase activity (flavodoxin)"/>
    <property type="evidence" value="ECO:0007669"/>
    <property type="project" value="UniProtKB-EC"/>
</dbReference>
<dbReference type="GO" id="GO:0005506">
    <property type="term" value="F:iron ion binding"/>
    <property type="evidence" value="ECO:0007669"/>
    <property type="project" value="InterPro"/>
</dbReference>
<dbReference type="GO" id="GO:0019288">
    <property type="term" value="P:isopentenyl diphosphate biosynthetic process, methylerythritol 4-phosphate pathway"/>
    <property type="evidence" value="ECO:0000318"/>
    <property type="project" value="GO_Central"/>
</dbReference>
<dbReference type="GO" id="GO:0016114">
    <property type="term" value="P:terpenoid biosynthetic process"/>
    <property type="evidence" value="ECO:0007669"/>
    <property type="project" value="InterPro"/>
</dbReference>
<dbReference type="FunFam" id="3.20.20.20:FF:000001">
    <property type="entry name" value="4-hydroxy-3-methylbut-2-en-1-yl diphosphate synthase (flavodoxin)"/>
    <property type="match status" value="1"/>
</dbReference>
<dbReference type="FunFam" id="3.30.413.10:FF:000005">
    <property type="entry name" value="4-hydroxy-3-methylbut-2-en-1-yl diphosphate synthase (flavodoxin)"/>
    <property type="match status" value="1"/>
</dbReference>
<dbReference type="Gene3D" id="3.20.20.20">
    <property type="entry name" value="Dihydropteroate synthase-like"/>
    <property type="match status" value="1"/>
</dbReference>
<dbReference type="Gene3D" id="3.30.413.10">
    <property type="entry name" value="Sulfite Reductase Hemoprotein, domain 1"/>
    <property type="match status" value="1"/>
</dbReference>
<dbReference type="HAMAP" id="MF_00159">
    <property type="entry name" value="IspG"/>
    <property type="match status" value="1"/>
</dbReference>
<dbReference type="InterPro" id="IPR011005">
    <property type="entry name" value="Dihydropteroate_synth-like_sf"/>
</dbReference>
<dbReference type="InterPro" id="IPR016425">
    <property type="entry name" value="IspG_bac"/>
</dbReference>
<dbReference type="InterPro" id="IPR004588">
    <property type="entry name" value="IspG_bac-typ"/>
</dbReference>
<dbReference type="InterPro" id="IPR045854">
    <property type="entry name" value="NO2/SO3_Rdtase_4Fe4S_sf"/>
</dbReference>
<dbReference type="InterPro" id="IPR011060">
    <property type="entry name" value="RibuloseP-bd_barrel"/>
</dbReference>
<dbReference type="NCBIfam" id="TIGR00612">
    <property type="entry name" value="ispG_gcpE"/>
    <property type="match status" value="1"/>
</dbReference>
<dbReference type="NCBIfam" id="NF001540">
    <property type="entry name" value="PRK00366.1"/>
    <property type="match status" value="1"/>
</dbReference>
<dbReference type="PANTHER" id="PTHR30454">
    <property type="entry name" value="4-HYDROXY-3-METHYLBUT-2-EN-1-YL DIPHOSPHATE SYNTHASE"/>
    <property type="match status" value="1"/>
</dbReference>
<dbReference type="PANTHER" id="PTHR30454:SF0">
    <property type="entry name" value="4-HYDROXY-3-METHYLBUT-2-EN-1-YL DIPHOSPHATE SYNTHASE (FERREDOXIN), CHLOROPLASTIC"/>
    <property type="match status" value="1"/>
</dbReference>
<dbReference type="Pfam" id="PF04551">
    <property type="entry name" value="GcpE"/>
    <property type="match status" value="1"/>
</dbReference>
<dbReference type="PIRSF" id="PIRSF004640">
    <property type="entry name" value="IspG"/>
    <property type="match status" value="1"/>
</dbReference>
<dbReference type="SUPFAM" id="SSF56014">
    <property type="entry name" value="Nitrite and sulphite reductase 4Fe-4S domain-like"/>
    <property type="match status" value="1"/>
</dbReference>
<dbReference type="SUPFAM" id="SSF51366">
    <property type="entry name" value="Ribulose-phoshate binding barrel"/>
    <property type="match status" value="1"/>
</dbReference>
<gene>
    <name evidence="1" type="primary">ispG</name>
    <name type="ordered locus">GSU1459</name>
</gene>
<protein>
    <recommendedName>
        <fullName evidence="1">4-hydroxy-3-methylbut-2-en-1-yl diphosphate synthase (flavodoxin)</fullName>
        <ecNumber evidence="1">1.17.7.3</ecNumber>
    </recommendedName>
    <alternativeName>
        <fullName evidence="1">1-hydroxy-2-methyl-2-(E)-butenyl 4-diphosphate synthase</fullName>
    </alternativeName>
</protein>
<organism>
    <name type="scientific">Geobacter sulfurreducens (strain ATCC 51573 / DSM 12127 / PCA)</name>
    <dbReference type="NCBI Taxonomy" id="243231"/>
    <lineage>
        <taxon>Bacteria</taxon>
        <taxon>Pseudomonadati</taxon>
        <taxon>Thermodesulfobacteriota</taxon>
        <taxon>Desulfuromonadia</taxon>
        <taxon>Geobacterales</taxon>
        <taxon>Geobacteraceae</taxon>
        <taxon>Geobacter</taxon>
    </lineage>
</organism>
<sequence length="353" mass="37369">MKAKTRQIRVGNVPVGGDAPCSVQSMCNTDTRDAGATLDQINALAAAGCEIVRCAVPDMAAAEALGAIKRQSPIPVIADIHFDYKLALKVLEGGIDGLRLNPGNIGERWKVEEVVAAARERLVPIRIGVNAGSLEKELLQKYGHPTAEAMVESALGHVRILEELGYDQIKISLKASDVPKTVAAYRLLAQRIDYPLHIGITEAGTMFSGTIKSAVGLGILLADGIGDTLRVSLTGDPVDEVRVGFEILKALNLRQKGINLVSCPTCGRCQINLIGVAEEVEKRLAGIDAHLTVAVMGCVVNGPGEAREADVGIAGGRGEGLLFRNGEIVRKVPEADMADALIAEVEKILAEKH</sequence>
<proteinExistence type="inferred from homology"/>
<keyword id="KW-0004">4Fe-4S</keyword>
<keyword id="KW-0408">Iron</keyword>
<keyword id="KW-0411">Iron-sulfur</keyword>
<keyword id="KW-0414">Isoprene biosynthesis</keyword>
<keyword id="KW-0479">Metal-binding</keyword>
<keyword id="KW-0560">Oxidoreductase</keyword>
<keyword id="KW-1185">Reference proteome</keyword>
<accession>Q74D60</accession>
<feature type="chain" id="PRO_0000190581" description="4-hydroxy-3-methylbut-2-en-1-yl diphosphate synthase (flavodoxin)">
    <location>
        <begin position="1"/>
        <end position="353"/>
    </location>
</feature>
<feature type="binding site" evidence="1">
    <location>
        <position position="263"/>
    </location>
    <ligand>
        <name>[4Fe-4S] cluster</name>
        <dbReference type="ChEBI" id="CHEBI:49883"/>
    </ligand>
</feature>
<feature type="binding site" evidence="1">
    <location>
        <position position="266"/>
    </location>
    <ligand>
        <name>[4Fe-4S] cluster</name>
        <dbReference type="ChEBI" id="CHEBI:49883"/>
    </ligand>
</feature>
<feature type="binding site" evidence="1">
    <location>
        <position position="298"/>
    </location>
    <ligand>
        <name>[4Fe-4S] cluster</name>
        <dbReference type="ChEBI" id="CHEBI:49883"/>
    </ligand>
</feature>
<feature type="binding site" evidence="1">
    <location>
        <position position="305"/>
    </location>
    <ligand>
        <name>[4Fe-4S] cluster</name>
        <dbReference type="ChEBI" id="CHEBI:49883"/>
    </ligand>
</feature>
<comment type="function">
    <text evidence="1">Converts 2C-methyl-D-erythritol 2,4-cyclodiphosphate (ME-2,4cPP) into 1-hydroxy-2-methyl-2-(E)-butenyl 4-diphosphate.</text>
</comment>
<comment type="catalytic activity">
    <reaction evidence="1">
        <text>(2E)-4-hydroxy-3-methylbut-2-enyl diphosphate + oxidized [flavodoxin] + H2O + 2 H(+) = 2-C-methyl-D-erythritol 2,4-cyclic diphosphate + reduced [flavodoxin]</text>
        <dbReference type="Rhea" id="RHEA:43604"/>
        <dbReference type="Rhea" id="RHEA-COMP:10622"/>
        <dbReference type="Rhea" id="RHEA-COMP:10623"/>
        <dbReference type="ChEBI" id="CHEBI:15377"/>
        <dbReference type="ChEBI" id="CHEBI:15378"/>
        <dbReference type="ChEBI" id="CHEBI:57618"/>
        <dbReference type="ChEBI" id="CHEBI:58210"/>
        <dbReference type="ChEBI" id="CHEBI:58483"/>
        <dbReference type="ChEBI" id="CHEBI:128753"/>
        <dbReference type="EC" id="1.17.7.3"/>
    </reaction>
</comment>
<comment type="cofactor">
    <cofactor evidence="1">
        <name>[4Fe-4S] cluster</name>
        <dbReference type="ChEBI" id="CHEBI:49883"/>
    </cofactor>
    <text evidence="1">Binds 1 [4Fe-4S] cluster.</text>
</comment>
<comment type="pathway">
    <text evidence="1">Isoprenoid biosynthesis; isopentenyl diphosphate biosynthesis via DXP pathway; isopentenyl diphosphate from 1-deoxy-D-xylulose 5-phosphate: step 5/6.</text>
</comment>
<comment type="similarity">
    <text evidence="1">Belongs to the IspG family.</text>
</comment>
<name>ISPG_GEOSL</name>
<reference key="1">
    <citation type="journal article" date="2003" name="Science">
        <title>Genome of Geobacter sulfurreducens: metal reduction in subsurface environments.</title>
        <authorList>
            <person name="Methe B.A."/>
            <person name="Nelson K.E."/>
            <person name="Eisen J.A."/>
            <person name="Paulsen I.T."/>
            <person name="Nelson W.C."/>
            <person name="Heidelberg J.F."/>
            <person name="Wu D."/>
            <person name="Wu M."/>
            <person name="Ward N.L."/>
            <person name="Beanan M.J."/>
            <person name="Dodson R.J."/>
            <person name="Madupu R."/>
            <person name="Brinkac L.M."/>
            <person name="Daugherty S.C."/>
            <person name="DeBoy R.T."/>
            <person name="Durkin A.S."/>
            <person name="Gwinn M.L."/>
            <person name="Kolonay J.F."/>
            <person name="Sullivan S.A."/>
            <person name="Haft D.H."/>
            <person name="Selengut J."/>
            <person name="Davidsen T.M."/>
            <person name="Zafar N."/>
            <person name="White O."/>
            <person name="Tran B."/>
            <person name="Romero C."/>
            <person name="Forberger H.A."/>
            <person name="Weidman J.F."/>
            <person name="Khouri H.M."/>
            <person name="Feldblyum T.V."/>
            <person name="Utterback T.R."/>
            <person name="Van Aken S.E."/>
            <person name="Lovley D.R."/>
            <person name="Fraser C.M."/>
        </authorList>
    </citation>
    <scope>NUCLEOTIDE SEQUENCE [LARGE SCALE GENOMIC DNA]</scope>
    <source>
        <strain>ATCC 51573 / DSM 12127 / PCA</strain>
    </source>
</reference>
<evidence type="ECO:0000255" key="1">
    <source>
        <dbReference type="HAMAP-Rule" id="MF_00159"/>
    </source>
</evidence>